<accession>B4SU51</accession>
<sequence length="491" mass="53482">MNTQQLAKLRSIVPEMRRVRHIHFVGIGGAGMGGIAEVLANEGYQISGSDLAPNPVTQQLTSLGATIFFNHRPENVRDASVVVVSSAISADNPEIVAAHEARIPVIRRAEMLAELMRFRHGIAIAGTHGKTTTTAMVSSIYAEAGLDPTFVNGGLVKAAGVHARLGHSRYLIAEADESDASFLHLQPMVAIVTNIEADHMDTYHGDFENLKQTFINFLHNLPFYGRAVMCVDDPVIRELLPRVGRQTTTYGFSEDADVRVEDYQQIGPQGHFTLLRQGMPDLHVTLNAPGRHNALNAAAAVAVATEEGIDDDAILRALESFQGTGRRFDFLGEFPLEPVNGKAGTAMLVDDYGHHPTEVDATIKAARAGWPDKNLVMLFQPHRYTRTRDLYDDFANVLTQVDALLMLDVYPAGEAPIPGADSRSLCRTIRNRGKIDPILVSDPAQVATMLAPVLTGNDLILVQGAGNVGKIARYLSEIKLKPQIQEEEQHG</sequence>
<protein>
    <recommendedName>
        <fullName evidence="1">UDP-N-acetylmuramate--L-alanine ligase</fullName>
        <ecNumber evidence="1">6.3.2.8</ecNumber>
    </recommendedName>
    <alternativeName>
        <fullName evidence="1">UDP-N-acetylmuramoyl-L-alanine synthetase</fullName>
    </alternativeName>
</protein>
<feature type="chain" id="PRO_1000091133" description="UDP-N-acetylmuramate--L-alanine ligase">
    <location>
        <begin position="1"/>
        <end position="491"/>
    </location>
</feature>
<feature type="binding site" evidence="1">
    <location>
        <begin position="126"/>
        <end position="132"/>
    </location>
    <ligand>
        <name>ATP</name>
        <dbReference type="ChEBI" id="CHEBI:30616"/>
    </ligand>
</feature>
<proteinExistence type="inferred from homology"/>
<evidence type="ECO:0000255" key="1">
    <source>
        <dbReference type="HAMAP-Rule" id="MF_00046"/>
    </source>
</evidence>
<dbReference type="EC" id="6.3.2.8" evidence="1"/>
<dbReference type="EMBL" id="CP001113">
    <property type="protein sequence ID" value="ACF64329.1"/>
    <property type="molecule type" value="Genomic_DNA"/>
</dbReference>
<dbReference type="RefSeq" id="WP_001096072.1">
    <property type="nucleotide sequence ID" value="NZ_CCMR01000003.1"/>
</dbReference>
<dbReference type="SMR" id="B4SU51"/>
<dbReference type="KEGG" id="see:SNSL254_A0141"/>
<dbReference type="HOGENOM" id="CLU_028104_2_2_6"/>
<dbReference type="UniPathway" id="UPA00219"/>
<dbReference type="Proteomes" id="UP000008824">
    <property type="component" value="Chromosome"/>
</dbReference>
<dbReference type="GO" id="GO:0005737">
    <property type="term" value="C:cytoplasm"/>
    <property type="evidence" value="ECO:0007669"/>
    <property type="project" value="UniProtKB-SubCell"/>
</dbReference>
<dbReference type="GO" id="GO:0005524">
    <property type="term" value="F:ATP binding"/>
    <property type="evidence" value="ECO:0007669"/>
    <property type="project" value="UniProtKB-UniRule"/>
</dbReference>
<dbReference type="GO" id="GO:0008763">
    <property type="term" value="F:UDP-N-acetylmuramate-L-alanine ligase activity"/>
    <property type="evidence" value="ECO:0007669"/>
    <property type="project" value="UniProtKB-UniRule"/>
</dbReference>
<dbReference type="GO" id="GO:0051301">
    <property type="term" value="P:cell division"/>
    <property type="evidence" value="ECO:0007669"/>
    <property type="project" value="UniProtKB-KW"/>
</dbReference>
<dbReference type="GO" id="GO:0071555">
    <property type="term" value="P:cell wall organization"/>
    <property type="evidence" value="ECO:0007669"/>
    <property type="project" value="UniProtKB-KW"/>
</dbReference>
<dbReference type="GO" id="GO:0009252">
    <property type="term" value="P:peptidoglycan biosynthetic process"/>
    <property type="evidence" value="ECO:0007669"/>
    <property type="project" value="UniProtKB-UniRule"/>
</dbReference>
<dbReference type="GO" id="GO:0008360">
    <property type="term" value="P:regulation of cell shape"/>
    <property type="evidence" value="ECO:0007669"/>
    <property type="project" value="UniProtKB-KW"/>
</dbReference>
<dbReference type="FunFam" id="3.40.1190.10:FF:000001">
    <property type="entry name" value="UDP-N-acetylmuramate--L-alanine ligase"/>
    <property type="match status" value="1"/>
</dbReference>
<dbReference type="FunFam" id="3.40.50.720:FF:000046">
    <property type="entry name" value="UDP-N-acetylmuramate--L-alanine ligase"/>
    <property type="match status" value="1"/>
</dbReference>
<dbReference type="FunFam" id="3.90.190.20:FF:000001">
    <property type="entry name" value="UDP-N-acetylmuramate--L-alanine ligase"/>
    <property type="match status" value="1"/>
</dbReference>
<dbReference type="Gene3D" id="3.90.190.20">
    <property type="entry name" value="Mur ligase, C-terminal domain"/>
    <property type="match status" value="1"/>
</dbReference>
<dbReference type="Gene3D" id="3.40.1190.10">
    <property type="entry name" value="Mur-like, catalytic domain"/>
    <property type="match status" value="1"/>
</dbReference>
<dbReference type="Gene3D" id="3.40.50.720">
    <property type="entry name" value="NAD(P)-binding Rossmann-like Domain"/>
    <property type="match status" value="1"/>
</dbReference>
<dbReference type="HAMAP" id="MF_00046">
    <property type="entry name" value="MurC"/>
    <property type="match status" value="1"/>
</dbReference>
<dbReference type="InterPro" id="IPR036565">
    <property type="entry name" value="Mur-like_cat_sf"/>
</dbReference>
<dbReference type="InterPro" id="IPR004101">
    <property type="entry name" value="Mur_ligase_C"/>
</dbReference>
<dbReference type="InterPro" id="IPR036615">
    <property type="entry name" value="Mur_ligase_C_dom_sf"/>
</dbReference>
<dbReference type="InterPro" id="IPR013221">
    <property type="entry name" value="Mur_ligase_cen"/>
</dbReference>
<dbReference type="InterPro" id="IPR000713">
    <property type="entry name" value="Mur_ligase_N"/>
</dbReference>
<dbReference type="InterPro" id="IPR050061">
    <property type="entry name" value="MurCDEF_pg_biosynth"/>
</dbReference>
<dbReference type="InterPro" id="IPR005758">
    <property type="entry name" value="UDP-N-AcMur_Ala_ligase_MurC"/>
</dbReference>
<dbReference type="NCBIfam" id="TIGR01082">
    <property type="entry name" value="murC"/>
    <property type="match status" value="1"/>
</dbReference>
<dbReference type="PANTHER" id="PTHR43445:SF3">
    <property type="entry name" value="UDP-N-ACETYLMURAMATE--L-ALANINE LIGASE"/>
    <property type="match status" value="1"/>
</dbReference>
<dbReference type="PANTHER" id="PTHR43445">
    <property type="entry name" value="UDP-N-ACETYLMURAMATE--L-ALANINE LIGASE-RELATED"/>
    <property type="match status" value="1"/>
</dbReference>
<dbReference type="Pfam" id="PF01225">
    <property type="entry name" value="Mur_ligase"/>
    <property type="match status" value="1"/>
</dbReference>
<dbReference type="Pfam" id="PF02875">
    <property type="entry name" value="Mur_ligase_C"/>
    <property type="match status" value="1"/>
</dbReference>
<dbReference type="Pfam" id="PF08245">
    <property type="entry name" value="Mur_ligase_M"/>
    <property type="match status" value="1"/>
</dbReference>
<dbReference type="SUPFAM" id="SSF51984">
    <property type="entry name" value="MurCD N-terminal domain"/>
    <property type="match status" value="1"/>
</dbReference>
<dbReference type="SUPFAM" id="SSF53623">
    <property type="entry name" value="MurD-like peptide ligases, catalytic domain"/>
    <property type="match status" value="1"/>
</dbReference>
<dbReference type="SUPFAM" id="SSF53244">
    <property type="entry name" value="MurD-like peptide ligases, peptide-binding domain"/>
    <property type="match status" value="1"/>
</dbReference>
<name>MURC_SALNS</name>
<reference key="1">
    <citation type="journal article" date="2011" name="J. Bacteriol.">
        <title>Comparative genomics of 28 Salmonella enterica isolates: evidence for CRISPR-mediated adaptive sublineage evolution.</title>
        <authorList>
            <person name="Fricke W.F."/>
            <person name="Mammel M.K."/>
            <person name="McDermott P.F."/>
            <person name="Tartera C."/>
            <person name="White D.G."/>
            <person name="Leclerc J.E."/>
            <person name="Ravel J."/>
            <person name="Cebula T.A."/>
        </authorList>
    </citation>
    <scope>NUCLEOTIDE SEQUENCE [LARGE SCALE GENOMIC DNA]</scope>
    <source>
        <strain>SL254</strain>
    </source>
</reference>
<organism>
    <name type="scientific">Salmonella newport (strain SL254)</name>
    <dbReference type="NCBI Taxonomy" id="423368"/>
    <lineage>
        <taxon>Bacteria</taxon>
        <taxon>Pseudomonadati</taxon>
        <taxon>Pseudomonadota</taxon>
        <taxon>Gammaproteobacteria</taxon>
        <taxon>Enterobacterales</taxon>
        <taxon>Enterobacteriaceae</taxon>
        <taxon>Salmonella</taxon>
    </lineage>
</organism>
<keyword id="KW-0067">ATP-binding</keyword>
<keyword id="KW-0131">Cell cycle</keyword>
<keyword id="KW-0132">Cell division</keyword>
<keyword id="KW-0133">Cell shape</keyword>
<keyword id="KW-0961">Cell wall biogenesis/degradation</keyword>
<keyword id="KW-0963">Cytoplasm</keyword>
<keyword id="KW-0436">Ligase</keyword>
<keyword id="KW-0547">Nucleotide-binding</keyword>
<keyword id="KW-0573">Peptidoglycan synthesis</keyword>
<comment type="function">
    <text evidence="1">Cell wall formation.</text>
</comment>
<comment type="catalytic activity">
    <reaction evidence="1">
        <text>UDP-N-acetyl-alpha-D-muramate + L-alanine + ATP = UDP-N-acetyl-alpha-D-muramoyl-L-alanine + ADP + phosphate + H(+)</text>
        <dbReference type="Rhea" id="RHEA:23372"/>
        <dbReference type="ChEBI" id="CHEBI:15378"/>
        <dbReference type="ChEBI" id="CHEBI:30616"/>
        <dbReference type="ChEBI" id="CHEBI:43474"/>
        <dbReference type="ChEBI" id="CHEBI:57972"/>
        <dbReference type="ChEBI" id="CHEBI:70757"/>
        <dbReference type="ChEBI" id="CHEBI:83898"/>
        <dbReference type="ChEBI" id="CHEBI:456216"/>
        <dbReference type="EC" id="6.3.2.8"/>
    </reaction>
</comment>
<comment type="pathway">
    <text evidence="1">Cell wall biogenesis; peptidoglycan biosynthesis.</text>
</comment>
<comment type="subcellular location">
    <subcellularLocation>
        <location evidence="1">Cytoplasm</location>
    </subcellularLocation>
</comment>
<comment type="similarity">
    <text evidence="1">Belongs to the MurCDEF family.</text>
</comment>
<gene>
    <name evidence="1" type="primary">murC</name>
    <name type="ordered locus">SNSL254_A0141</name>
</gene>